<reference key="1">
    <citation type="journal article" date="1999" name="Brain Res. Mol. Brain Res.">
        <title>Molecular cloning and characterization of a novel developmentally regulated gene, Bdm1, showing predominant expression in postnatal rat brain.</title>
        <authorList>
            <person name="Yamauchi Y."/>
            <person name="Hongo S."/>
            <person name="Nishinaka N."/>
            <person name="Ohashi T."/>
            <person name="Takahashi R."/>
            <person name="Takeda M."/>
        </authorList>
    </citation>
    <scope>NUCLEOTIDE SEQUENCE [MRNA] (ISOFORM 1)</scope>
    <scope>TISSUE SPECIFICITY</scope>
    <source>
        <strain>Long Evans</strain>
        <tissue>Brain</tissue>
    </source>
</reference>
<reference key="2">
    <citation type="journal article" date="2004" name="Gene">
        <title>Genomic organization, expression, and comparative analysis of noncoding region of the rat Ndrg4 gene.</title>
        <authorList>
            <person name="Maeda A."/>
            <person name="Hongo S."/>
            <person name="Miyazaki A."/>
        </authorList>
    </citation>
    <scope>NUCLEOTIDE SEQUENCE [GENOMIC DNA / MRNA] (ISOFORMS 1; 2; 3; 4; 5 AND 6)</scope>
    <scope>DEVELOPMENTAL STAGE</scope>
    <scope>TISSUE SPECIFICITY</scope>
    <source>
        <strain>Long Evans</strain>
    </source>
</reference>
<reference key="3">
    <citation type="journal article" date="2006" name="J. Cell. Biochem.">
        <title>Ndrg4 enhances NGF-induced ERK activation uncoupled with Elk-1 activation.</title>
        <authorList>
            <person name="Hongo S."/>
            <person name="Watanabe T."/>
            <person name="Takahashi K."/>
            <person name="Miyazaki A."/>
        </authorList>
    </citation>
    <scope>FUNCTION</scope>
</reference>
<reference key="4">
    <citation type="journal article" date="2012" name="Nat. Commun.">
        <title>Quantitative maps of protein phosphorylation sites across 14 different rat organs and tissues.</title>
        <authorList>
            <person name="Lundby A."/>
            <person name="Secher A."/>
            <person name="Lage K."/>
            <person name="Nordsborg N.B."/>
            <person name="Dmytriyev A."/>
            <person name="Lundby C."/>
            <person name="Olsen J.V."/>
        </authorList>
    </citation>
    <scope>PHOSPHORYLATION [LARGE SCALE ANALYSIS] AT SER-298 AND SER-317</scope>
    <scope>IDENTIFICATION BY MASS SPECTROMETRY [LARGE SCALE ANALYSIS]</scope>
</reference>
<keyword id="KW-0025">Alternative splicing</keyword>
<keyword id="KW-0963">Cytoplasm</keyword>
<keyword id="KW-0597">Phosphoprotein</keyword>
<keyword id="KW-1185">Reference proteome</keyword>
<evidence type="ECO:0000250" key="1"/>
<evidence type="ECO:0000250" key="2">
    <source>
        <dbReference type="UniProtKB" id="Q8BTG7"/>
    </source>
</evidence>
<evidence type="ECO:0000256" key="3">
    <source>
        <dbReference type="SAM" id="MobiDB-lite"/>
    </source>
</evidence>
<evidence type="ECO:0000269" key="4">
    <source>
    </source>
</evidence>
<evidence type="ECO:0000269" key="5">
    <source>
    </source>
</evidence>
<evidence type="ECO:0000269" key="6">
    <source>
    </source>
</evidence>
<evidence type="ECO:0000303" key="7">
    <source>
    </source>
</evidence>
<evidence type="ECO:0000305" key="8"/>
<evidence type="ECO:0007744" key="9">
    <source>
    </source>
</evidence>
<sequence>MPECWDGEHDIETPYGLLHVVIRGSPKGNRPAILTYHDVGLNHKLCFNTLFNLEDMQEITKHFVVCHVDAPGQQVGASQFPQGYQFPSMEQLATMLPNVVQHFGFKYVIGIGVGAGAYVLAKFALIFPDLVEGLVLMNIDPNGKGWIDWAATKLSGLTSTLPDTVLSHLFSQEELVNNTELVQSYRQQISSVVNQANLQLFWNMYNSRRDLDINRPGTVPNAKTLRCPVMLVVGDNAPAEDGVVECNSKLDPTTTTFLKMADSGGLPQVTQPGKLTEAFKYFLQGMGYIAHLKDRRLSGGAVPSASMTRLARSRTASLTSASSVDGSRPQPCTHSDSSEGMGQVNHTMEVSC</sequence>
<comment type="function">
    <text evidence="1 6">Contributes to the maintenance of intracerebral BDNF levels within the normal range, which is necessary for the preservation of spatial learning and the resistance to neuronal cell death caused by ischemic stress (By similarity). May enhance growth factor-induced ERK1 and ERK2 phosphorylation, including that induced by NGF. May attenuate NGF-promoted ELK1 phosphorylation in a microtubule-dependent manner.</text>
</comment>
<comment type="subcellular location">
    <subcellularLocation>
        <location evidence="1">Cytoplasm</location>
        <location evidence="1">Cytosol</location>
    </subcellularLocation>
</comment>
<comment type="alternative products">
    <event type="alternative splicing"/>
    <isoform>
        <id>Q9Z2L9-1</id>
        <name>1</name>
        <name>A1</name>
        <sequence type="displayed"/>
    </isoform>
    <isoform>
        <id>Q9Z2L9-2</id>
        <name>2</name>
        <name>B1</name>
        <sequence type="described" ref="VSP_022960"/>
    </isoform>
    <isoform>
        <id>Q9Z2L9-3</id>
        <name>3</name>
        <name>C1</name>
        <sequence type="described" ref="VSP_022961"/>
    </isoform>
    <isoform>
        <id>Q9Z2L9-4</id>
        <name>4</name>
        <name>A2</name>
        <sequence type="described" ref="VSP_022962"/>
    </isoform>
    <isoform>
        <id>Q9Z2L9-5</id>
        <name>5</name>
        <name>B2</name>
        <sequence type="described" ref="VSP_022960 VSP_022962"/>
    </isoform>
    <isoform>
        <id>Q9Z2L9-6</id>
        <name>6</name>
        <name>C2</name>
        <sequence type="described" ref="VSP_022961 VSP_022962"/>
    </isoform>
</comment>
<comment type="tissue specificity">
    <text evidence="4 5">Expressed in the brain and heart, weakly in the kidney; most prominently in postnatal brain where it is expressed widely in the olfactory bulb, cerebral cortex, hippocampus, cerebellum, thalamus, and medulla oblongata.</text>
</comment>
<comment type="developmental stage">
    <text evidence="5">Isoform 1, isoform 2 and isoform 3 are detected in maturing and mature brain, whereas isoform 4, isoform 5 and isoform 6 are expressed in embryonic and early postnatal brain. All isoforms are expressed in heart.</text>
</comment>
<comment type="similarity">
    <text evidence="8">Belongs to the NDRG family.</text>
</comment>
<dbReference type="EMBL" id="AF045564">
    <property type="protein sequence ID" value="AAD02415.1"/>
    <property type="molecule type" value="mRNA"/>
</dbReference>
<dbReference type="EMBL" id="AY217029">
    <property type="protein sequence ID" value="AAO65543.1"/>
    <property type="molecule type" value="mRNA"/>
</dbReference>
<dbReference type="EMBL" id="AY217030">
    <property type="protein sequence ID" value="AAO65544.1"/>
    <property type="molecule type" value="mRNA"/>
</dbReference>
<dbReference type="EMBL" id="AY217031">
    <property type="protein sequence ID" value="AAO65545.1"/>
    <property type="molecule type" value="mRNA"/>
</dbReference>
<dbReference type="EMBL" id="AY217032">
    <property type="protein sequence ID" value="AAO65546.1"/>
    <property type="molecule type" value="mRNA"/>
</dbReference>
<dbReference type="EMBL" id="AY217033">
    <property type="protein sequence ID" value="AAO65547.1"/>
    <property type="molecule type" value="mRNA"/>
</dbReference>
<dbReference type="EMBL" id="AF524894">
    <property type="protein sequence ID" value="AAP46191.1"/>
    <property type="molecule type" value="Genomic_DNA"/>
</dbReference>
<dbReference type="EMBL" id="AF524894">
    <property type="protein sequence ID" value="AAP46192.1"/>
    <property type="molecule type" value="Genomic_DNA"/>
</dbReference>
<dbReference type="EMBL" id="AY255791">
    <property type="protein sequence ID" value="AAQ17047.1"/>
    <property type="molecule type" value="mRNA"/>
</dbReference>
<dbReference type="SMR" id="Q9Z2L9"/>
<dbReference type="FunCoup" id="Q9Z2L9">
    <property type="interactions" value="1474"/>
</dbReference>
<dbReference type="STRING" id="10116.ENSRNOP00000044520"/>
<dbReference type="ESTHER" id="ratno-ndr4">
    <property type="family name" value="Ndr_family"/>
</dbReference>
<dbReference type="MEROPS" id="S33.986"/>
<dbReference type="iPTMnet" id="Q9Z2L9"/>
<dbReference type="PhosphoSitePlus" id="Q9Z2L9"/>
<dbReference type="SwissPalm" id="Q9Z2L9"/>
<dbReference type="PaxDb" id="10116-ENSRNOP00000044520"/>
<dbReference type="UCSC" id="RGD:621593">
    <molecule id="Q9Z2L9-1"/>
    <property type="organism name" value="rat"/>
</dbReference>
<dbReference type="AGR" id="RGD:621593"/>
<dbReference type="RGD" id="621593">
    <property type="gene designation" value="Ndrg4"/>
</dbReference>
<dbReference type="eggNOG" id="KOG2931">
    <property type="taxonomic scope" value="Eukaryota"/>
</dbReference>
<dbReference type="InParanoid" id="Q9Z2L9"/>
<dbReference type="PhylomeDB" id="Q9Z2L9"/>
<dbReference type="PRO" id="PR:Q9Z2L9"/>
<dbReference type="Proteomes" id="UP000002494">
    <property type="component" value="Unplaced"/>
</dbReference>
<dbReference type="GO" id="GO:0016323">
    <property type="term" value="C:basolateral plasma membrane"/>
    <property type="evidence" value="ECO:0000266"/>
    <property type="project" value="RGD"/>
</dbReference>
<dbReference type="GO" id="GO:0031253">
    <property type="term" value="C:cell projection membrane"/>
    <property type="evidence" value="ECO:0000266"/>
    <property type="project" value="RGD"/>
</dbReference>
<dbReference type="GO" id="GO:0005737">
    <property type="term" value="C:cytoplasm"/>
    <property type="evidence" value="ECO:0000266"/>
    <property type="project" value="RGD"/>
</dbReference>
<dbReference type="GO" id="GO:0005829">
    <property type="term" value="C:cytosol"/>
    <property type="evidence" value="ECO:0007669"/>
    <property type="project" value="UniProtKB-SubCell"/>
</dbReference>
<dbReference type="GO" id="GO:0005789">
    <property type="term" value="C:endoplasmic reticulum membrane"/>
    <property type="evidence" value="ECO:0000314"/>
    <property type="project" value="RGD"/>
</dbReference>
<dbReference type="GO" id="GO:0060973">
    <property type="term" value="P:cell migration involved in heart development"/>
    <property type="evidence" value="ECO:0000266"/>
    <property type="project" value="RGD"/>
</dbReference>
<dbReference type="GO" id="GO:0010642">
    <property type="term" value="P:negative regulation of platelet-derived growth factor receptor signaling pathway"/>
    <property type="evidence" value="ECO:0000266"/>
    <property type="project" value="RGD"/>
</dbReference>
<dbReference type="GO" id="GO:0014912">
    <property type="term" value="P:negative regulation of smooth muscle cell migration"/>
    <property type="evidence" value="ECO:0000266"/>
    <property type="project" value="RGD"/>
</dbReference>
<dbReference type="GO" id="GO:0048662">
    <property type="term" value="P:negative regulation of smooth muscle cell proliferation"/>
    <property type="evidence" value="ECO:0000266"/>
    <property type="project" value="RGD"/>
</dbReference>
<dbReference type="GO" id="GO:0070374">
    <property type="term" value="P:positive regulation of ERK1 and ERK2 cascade"/>
    <property type="evidence" value="ECO:0000314"/>
    <property type="project" value="BHF-UCL"/>
</dbReference>
<dbReference type="GO" id="GO:0010976">
    <property type="term" value="P:positive regulation of neuron projection development"/>
    <property type="evidence" value="ECO:0000315"/>
    <property type="project" value="RGD"/>
</dbReference>
<dbReference type="GO" id="GO:2001135">
    <property type="term" value="P:regulation of endocytic recycling"/>
    <property type="evidence" value="ECO:0000266"/>
    <property type="project" value="RGD"/>
</dbReference>
<dbReference type="GO" id="GO:0007165">
    <property type="term" value="P:signal transduction"/>
    <property type="evidence" value="ECO:0000318"/>
    <property type="project" value="GO_Central"/>
</dbReference>
<dbReference type="GO" id="GO:0048278">
    <property type="term" value="P:vesicle docking"/>
    <property type="evidence" value="ECO:0000266"/>
    <property type="project" value="RGD"/>
</dbReference>
<dbReference type="GO" id="GO:0008542">
    <property type="term" value="P:visual learning"/>
    <property type="evidence" value="ECO:0000266"/>
    <property type="project" value="RGD"/>
</dbReference>
<dbReference type="FunFam" id="3.40.50.1820:FF:000009">
    <property type="entry name" value="NDRG family member 4"/>
    <property type="match status" value="1"/>
</dbReference>
<dbReference type="Gene3D" id="3.40.50.1820">
    <property type="entry name" value="alpha/beta hydrolase"/>
    <property type="match status" value="1"/>
</dbReference>
<dbReference type="InterPro" id="IPR029058">
    <property type="entry name" value="AB_hydrolase_fold"/>
</dbReference>
<dbReference type="InterPro" id="IPR004142">
    <property type="entry name" value="NDRG"/>
</dbReference>
<dbReference type="PANTHER" id="PTHR11034">
    <property type="entry name" value="N-MYC DOWNSTREAM REGULATED"/>
    <property type="match status" value="1"/>
</dbReference>
<dbReference type="Pfam" id="PF03096">
    <property type="entry name" value="Ndr"/>
    <property type="match status" value="1"/>
</dbReference>
<dbReference type="SUPFAM" id="SSF53474">
    <property type="entry name" value="alpha/beta-Hydrolases"/>
    <property type="match status" value="1"/>
</dbReference>
<gene>
    <name type="primary">Ndrg4</name>
    <name type="synonym">Bdm1</name>
    <name type="synonym">Ndr4</name>
</gene>
<organism>
    <name type="scientific">Rattus norvegicus</name>
    <name type="common">Rat</name>
    <dbReference type="NCBI Taxonomy" id="10116"/>
    <lineage>
        <taxon>Eukaryota</taxon>
        <taxon>Metazoa</taxon>
        <taxon>Chordata</taxon>
        <taxon>Craniata</taxon>
        <taxon>Vertebrata</taxon>
        <taxon>Euteleostomi</taxon>
        <taxon>Mammalia</taxon>
        <taxon>Eutheria</taxon>
        <taxon>Euarchontoglires</taxon>
        <taxon>Glires</taxon>
        <taxon>Rodentia</taxon>
        <taxon>Myomorpha</taxon>
        <taxon>Muroidea</taxon>
        <taxon>Muridae</taxon>
        <taxon>Murinae</taxon>
        <taxon>Rattus</taxon>
    </lineage>
</organism>
<feature type="chain" id="PRO_0000159581" description="Protein NDRG4">
    <location>
        <begin position="1"/>
        <end position="352"/>
    </location>
</feature>
<feature type="region of interest" description="Disordered" evidence="3">
    <location>
        <begin position="301"/>
        <end position="352"/>
    </location>
</feature>
<feature type="compositionally biased region" description="Low complexity" evidence="3">
    <location>
        <begin position="308"/>
        <end position="323"/>
    </location>
</feature>
<feature type="compositionally biased region" description="Polar residues" evidence="3">
    <location>
        <begin position="330"/>
        <end position="352"/>
    </location>
</feature>
<feature type="modified residue" description="Phosphoserine" evidence="9">
    <location>
        <position position="298"/>
    </location>
</feature>
<feature type="modified residue" description="Phosphoserine" evidence="9">
    <location>
        <position position="317"/>
    </location>
</feature>
<feature type="modified residue" description="Phosphoserine" evidence="2">
    <location>
        <position position="323"/>
    </location>
</feature>
<feature type="splice variant" id="VSP_022960" description="In isoform 2 and isoform 5." evidence="7">
    <original>MPECWDG</original>
    <variation>MAGLQELRFPEEKPLLRGQDATELDNPDAFLSVVDTDWK</variation>
    <location>
        <begin position="1"/>
        <end position="7"/>
    </location>
</feature>
<feature type="splice variant" id="VSP_022961" description="In isoform 3 and isoform 6." evidence="7">
    <original>MPECWDG</original>
    <variation>MKVLGHRLQLPTGLLLHDVTMAGLQELRFPEEKPLLRGQDATELDNPDAFLSVVDTDWK</variation>
    <location>
        <begin position="1"/>
        <end position="7"/>
    </location>
</feature>
<feature type="splice variant" id="VSP_022962" description="In isoform 4, isoform 5 and isoform 6." evidence="7">
    <original>IAHLKDRRLSGGAV</original>
    <variation>M</variation>
    <location>
        <begin position="289"/>
        <end position="302"/>
    </location>
</feature>
<protein>
    <recommendedName>
        <fullName>Protein NDRG4</fullName>
    </recommendedName>
    <alternativeName>
        <fullName>Brain development-related molecule 1</fullName>
    </alternativeName>
</protein>
<proteinExistence type="evidence at protein level"/>
<accession>Q9Z2L9</accession>
<accession>Q6XQ62</accession>
<accession>Q6XQ63</accession>
<accession>Q6XQ64</accession>
<accession>Q6XQ65</accession>
<accession>Q78ZK9</accession>
<accession>Q7TST8</accession>
<name>NDRG4_RAT</name>